<protein>
    <recommendedName>
        <fullName evidence="1">Enolase-phosphatase E1</fullName>
        <ecNumber evidence="1">3.1.3.77</ecNumber>
    </recommendedName>
    <alternativeName>
        <fullName evidence="1">2,3-diketo-5-methylthio-1-phosphopentane phosphatase</fullName>
    </alternativeName>
</protein>
<sequence>MSDSRLRRRQGTAGTDNKRRADGPHDISGLLDGVSVVLLDIEGTTTPITFVKDELFPYVCSHVRQHLEEHWKEEECQEDIAALRKQAKEDKEMDGVVLIPECTTKDDDEEARKKVLSAVVDNVLLNMDADRKVTALKQLQGHMWRAAYQTGKIKGEYVKLTFADVVPAIRGWLETGRQVYIYSSGSVEAQKLLFGFSTEGDLLELFSGHFDTTTGLKVETESYRRIAKTVGCDPANILFLTDVVREAKPSREAGMKTCLTVRPGNAPLTEEDWANYPVIKSFSELACDVSPTKMRSRGKAAT</sequence>
<name>ENOPH_BRAFL</name>
<reference key="1">
    <citation type="journal article" date="2008" name="Nature">
        <title>The amphioxus genome and the evolution of the chordate karyotype.</title>
        <authorList>
            <person name="Putnam N.H."/>
            <person name="Butts T."/>
            <person name="Ferrier D.E.K."/>
            <person name="Furlong R.F."/>
            <person name="Hellsten U."/>
            <person name="Kawashima T."/>
            <person name="Robinson-Rechavi M."/>
            <person name="Shoguchi E."/>
            <person name="Terry A."/>
            <person name="Yu J.-K."/>
            <person name="Benito-Gutierrez E.L."/>
            <person name="Dubchak I."/>
            <person name="Garcia-Fernandez J."/>
            <person name="Gibson-Brown J.J."/>
            <person name="Grigoriev I.V."/>
            <person name="Horton A.C."/>
            <person name="de Jong P.J."/>
            <person name="Jurka J."/>
            <person name="Kapitonov V.V."/>
            <person name="Kohara Y."/>
            <person name="Kuroki Y."/>
            <person name="Lindquist E."/>
            <person name="Lucas S."/>
            <person name="Osoegawa K."/>
            <person name="Pennacchio L.A."/>
            <person name="Salamov A.A."/>
            <person name="Satou Y."/>
            <person name="Sauka-Spengler T."/>
            <person name="Schmutz J."/>
            <person name="Shin-I T."/>
            <person name="Toyoda A."/>
            <person name="Bronner-Fraser M."/>
            <person name="Fujiyama A."/>
            <person name="Holland L.Z."/>
            <person name="Holland P.W.H."/>
            <person name="Satoh N."/>
            <person name="Rokhsar D.S."/>
        </authorList>
    </citation>
    <scope>NUCLEOTIDE SEQUENCE [LARGE SCALE GENOMIC DNA]</scope>
    <source>
        <strain>S238N-H82</strain>
        <tissue>Testis</tissue>
    </source>
</reference>
<accession>C3XR70</accession>
<feature type="chain" id="PRO_0000393971" description="Enolase-phosphatase E1">
    <location>
        <begin position="1"/>
        <end position="302"/>
    </location>
</feature>
<feature type="region of interest" description="Disordered" evidence="2">
    <location>
        <begin position="1"/>
        <end position="25"/>
    </location>
</feature>
<feature type="compositionally biased region" description="Basic residues" evidence="2">
    <location>
        <begin position="1"/>
        <end position="10"/>
    </location>
</feature>
<feature type="compositionally biased region" description="Basic and acidic residues" evidence="2">
    <location>
        <begin position="16"/>
        <end position="25"/>
    </location>
</feature>
<feature type="binding site" evidence="1">
    <location>
        <position position="40"/>
    </location>
    <ligand>
        <name>Mg(2+)</name>
        <dbReference type="ChEBI" id="CHEBI:18420"/>
    </ligand>
</feature>
<feature type="binding site" evidence="1">
    <location>
        <position position="42"/>
    </location>
    <ligand>
        <name>Mg(2+)</name>
        <dbReference type="ChEBI" id="CHEBI:18420"/>
    </ligand>
</feature>
<feature type="binding site" evidence="1">
    <location>
        <begin position="183"/>
        <end position="184"/>
    </location>
    <ligand>
        <name>substrate</name>
    </ligand>
</feature>
<feature type="binding site" evidence="1">
    <location>
        <position position="217"/>
    </location>
    <ligand>
        <name>substrate</name>
    </ligand>
</feature>
<feature type="binding site" evidence="1">
    <location>
        <position position="242"/>
    </location>
    <ligand>
        <name>Mg(2+)</name>
        <dbReference type="ChEBI" id="CHEBI:18420"/>
    </ligand>
</feature>
<gene>
    <name type="ORF">BRAFLDRAFT_73099</name>
</gene>
<keyword id="KW-0028">Amino-acid biosynthesis</keyword>
<keyword id="KW-0963">Cytoplasm</keyword>
<keyword id="KW-0378">Hydrolase</keyword>
<keyword id="KW-0460">Magnesium</keyword>
<keyword id="KW-0479">Metal-binding</keyword>
<keyword id="KW-0486">Methionine biosynthesis</keyword>
<keyword id="KW-0539">Nucleus</keyword>
<keyword id="KW-1185">Reference proteome</keyword>
<proteinExistence type="inferred from homology"/>
<dbReference type="EC" id="3.1.3.77" evidence="1"/>
<dbReference type="EMBL" id="GG666456">
    <property type="protein sequence ID" value="EEN69188.1"/>
    <property type="molecule type" value="Genomic_DNA"/>
</dbReference>
<dbReference type="RefSeq" id="XP_002613179.1">
    <property type="nucleotide sequence ID" value="XM_002613133.1"/>
</dbReference>
<dbReference type="SMR" id="C3XR70"/>
<dbReference type="STRING" id="7739.C3XR70"/>
<dbReference type="eggNOG" id="KOG2630">
    <property type="taxonomic scope" value="Eukaryota"/>
</dbReference>
<dbReference type="InParanoid" id="C3XR70"/>
<dbReference type="UniPathway" id="UPA00904">
    <property type="reaction ID" value="UER00876"/>
</dbReference>
<dbReference type="UniPathway" id="UPA00904">
    <property type="reaction ID" value="UER00877"/>
</dbReference>
<dbReference type="Proteomes" id="UP000001554">
    <property type="component" value="Unplaced"/>
</dbReference>
<dbReference type="GO" id="GO:0005737">
    <property type="term" value="C:cytoplasm"/>
    <property type="evidence" value="ECO:0007669"/>
    <property type="project" value="UniProtKB-SubCell"/>
</dbReference>
<dbReference type="GO" id="GO:0005634">
    <property type="term" value="C:nucleus"/>
    <property type="evidence" value="ECO:0007669"/>
    <property type="project" value="UniProtKB-SubCell"/>
</dbReference>
<dbReference type="GO" id="GO:0043874">
    <property type="term" value="F:acireductone synthase activity"/>
    <property type="evidence" value="ECO:0000318"/>
    <property type="project" value="GO_Central"/>
</dbReference>
<dbReference type="GO" id="GO:0000287">
    <property type="term" value="F:magnesium ion binding"/>
    <property type="evidence" value="ECO:0007669"/>
    <property type="project" value="UniProtKB-UniRule"/>
</dbReference>
<dbReference type="GO" id="GO:0019509">
    <property type="term" value="P:L-methionine salvage from methylthioadenosine"/>
    <property type="evidence" value="ECO:0000318"/>
    <property type="project" value="GO_Central"/>
</dbReference>
<dbReference type="CDD" id="cd01629">
    <property type="entry name" value="HAD_EP"/>
    <property type="match status" value="1"/>
</dbReference>
<dbReference type="FunFam" id="3.40.50.1000:FF:000079">
    <property type="entry name" value="Enolase-phosphatase E1"/>
    <property type="match status" value="1"/>
</dbReference>
<dbReference type="FunFam" id="1.10.720.60:FF:000001">
    <property type="entry name" value="Probable bifunctional methylthioribulose-1-phosphate dehydratase/enolase-phosphatase E1"/>
    <property type="match status" value="1"/>
</dbReference>
<dbReference type="Gene3D" id="1.10.720.60">
    <property type="match status" value="1"/>
</dbReference>
<dbReference type="Gene3D" id="3.40.50.1000">
    <property type="entry name" value="HAD superfamily/HAD-like"/>
    <property type="match status" value="1"/>
</dbReference>
<dbReference type="HAMAP" id="MF_03117">
    <property type="entry name" value="Salvage_MtnC_euk"/>
    <property type="match status" value="1"/>
</dbReference>
<dbReference type="InterPro" id="IPR023943">
    <property type="entry name" value="Enolase-ppase_E1"/>
</dbReference>
<dbReference type="InterPro" id="IPR027511">
    <property type="entry name" value="ENOPH1_eukaryotes"/>
</dbReference>
<dbReference type="InterPro" id="IPR036412">
    <property type="entry name" value="HAD-like_sf"/>
</dbReference>
<dbReference type="InterPro" id="IPR023214">
    <property type="entry name" value="HAD_sf"/>
</dbReference>
<dbReference type="NCBIfam" id="TIGR01691">
    <property type="entry name" value="enolase-ppase"/>
    <property type="match status" value="1"/>
</dbReference>
<dbReference type="PANTHER" id="PTHR20371">
    <property type="entry name" value="ENOLASE-PHOSPHATASE E1"/>
    <property type="match status" value="1"/>
</dbReference>
<dbReference type="PANTHER" id="PTHR20371:SF1">
    <property type="entry name" value="ENOLASE-PHOSPHATASE E1"/>
    <property type="match status" value="1"/>
</dbReference>
<dbReference type="SFLD" id="SFLDG01129">
    <property type="entry name" value="C1.5:_HAD__Beta-PGM__Phosphata"/>
    <property type="match status" value="1"/>
</dbReference>
<dbReference type="SFLD" id="SFLDF00044">
    <property type="entry name" value="enolase-phosphatase"/>
    <property type="match status" value="1"/>
</dbReference>
<dbReference type="SUPFAM" id="SSF56784">
    <property type="entry name" value="HAD-like"/>
    <property type="match status" value="1"/>
</dbReference>
<organism>
    <name type="scientific">Branchiostoma floridae</name>
    <name type="common">Florida lancelet</name>
    <name type="synonym">Amphioxus</name>
    <dbReference type="NCBI Taxonomy" id="7739"/>
    <lineage>
        <taxon>Eukaryota</taxon>
        <taxon>Metazoa</taxon>
        <taxon>Chordata</taxon>
        <taxon>Cephalochordata</taxon>
        <taxon>Leptocardii</taxon>
        <taxon>Amphioxiformes</taxon>
        <taxon>Branchiostomatidae</taxon>
        <taxon>Branchiostoma</taxon>
    </lineage>
</organism>
<evidence type="ECO:0000255" key="1">
    <source>
        <dbReference type="HAMAP-Rule" id="MF_03117"/>
    </source>
</evidence>
<evidence type="ECO:0000256" key="2">
    <source>
        <dbReference type="SAM" id="MobiDB-lite"/>
    </source>
</evidence>
<comment type="function">
    <text evidence="1">Bifunctional enzyme that catalyzes the enolization of 2,3-diketo-5-methylthiopentyl-1-phosphate (DK-MTP-1-P) into the intermediate 2-hydroxy-3-keto-5-methylthiopentenyl-1-phosphate (HK-MTPenyl-1-P), which is then dephosphorylated to form the acireductone 1,2-dihydroxy-3-keto-5-methylthiopentene (DHK-MTPene).</text>
</comment>
<comment type="catalytic activity">
    <reaction evidence="1">
        <text>5-methylsulfanyl-2,3-dioxopentyl phosphate + H2O = 1,2-dihydroxy-5-(methylsulfanyl)pent-1-en-3-one + phosphate</text>
        <dbReference type="Rhea" id="RHEA:21700"/>
        <dbReference type="ChEBI" id="CHEBI:15377"/>
        <dbReference type="ChEBI" id="CHEBI:43474"/>
        <dbReference type="ChEBI" id="CHEBI:49252"/>
        <dbReference type="ChEBI" id="CHEBI:58828"/>
        <dbReference type="EC" id="3.1.3.77"/>
    </reaction>
</comment>
<comment type="cofactor">
    <cofactor evidence="1">
        <name>Mg(2+)</name>
        <dbReference type="ChEBI" id="CHEBI:18420"/>
    </cofactor>
    <text evidence="1">Binds 1 Mg(2+) ion per subunit.</text>
</comment>
<comment type="pathway">
    <text evidence="1">Amino-acid biosynthesis; L-methionine biosynthesis via salvage pathway; L-methionine from S-methyl-5-thio-alpha-D-ribose 1-phosphate: step 3/6.</text>
</comment>
<comment type="pathway">
    <text evidence="1">Amino-acid biosynthesis; L-methionine biosynthesis via salvage pathway; L-methionine from S-methyl-5-thio-alpha-D-ribose 1-phosphate: step 4/6.</text>
</comment>
<comment type="subunit">
    <text evidence="1">Monomer.</text>
</comment>
<comment type="subcellular location">
    <subcellularLocation>
        <location evidence="1">Cytoplasm</location>
    </subcellularLocation>
    <subcellularLocation>
        <location evidence="1">Nucleus</location>
    </subcellularLocation>
</comment>
<comment type="similarity">
    <text evidence="1">Belongs to the HAD-like hydrolase superfamily. MasA/MtnC family.</text>
</comment>